<accession>A0A1W2P884</accession>
<organism>
    <name type="scientific">Mus musculus</name>
    <name type="common">Mouse</name>
    <dbReference type="NCBI Taxonomy" id="10090"/>
    <lineage>
        <taxon>Eukaryota</taxon>
        <taxon>Metazoa</taxon>
        <taxon>Chordata</taxon>
        <taxon>Craniata</taxon>
        <taxon>Vertebrata</taxon>
        <taxon>Euteleostomi</taxon>
        <taxon>Mammalia</taxon>
        <taxon>Eutheria</taxon>
        <taxon>Euarchontoglires</taxon>
        <taxon>Glires</taxon>
        <taxon>Rodentia</taxon>
        <taxon>Myomorpha</taxon>
        <taxon>Muroidea</taxon>
        <taxon>Muridae</taxon>
        <taxon>Murinae</taxon>
        <taxon>Mus</taxon>
        <taxon>Mus</taxon>
    </lineage>
</organism>
<sequence>MWGRFLAPEAGGRDSPSGARSFPAGSDYSSAWLPGNESLWQATAVPSNHRNNHLRRHSITSDSGDTGIGTSCSDSVEDHSTSSGTLSFKPSRSLVTLPTAHVMPSNSSASVSKHRESLTPDGSKWSTSLMQTLGDHSRGERDSSLDMKDFRPLRKWSSLSKLTAPDTRNHSGIAYPQELRNSLEMTGKGKPFMSHLRTFGPSCLHDSMELLKLEDKEINKKRSSTLDCKYKFESCNKEDVRVSSSALRRQTLDMTYSALPESKPIVTGSETFESPKYLMLGQQAVGGVPIQPSVRTQMWLTEQLRTNPLEGRTTDDSYSLAPWQQPQTEEFQQGSETPMQVLTGSSRQSYSPPGFQDFSKWESVLKIKEGLLRQKEIVIDRQKQQINHLHERIRDNELRAQHAMLGHYVNCEDSYVSNLQPQYESSSGQSLFTEQPLSHPHQEELEQKLASTEKEVLQLNEFLKQRISQFSEEKKKLEEKLKTRDRYISSLKKKCQKESEQNKEKQRRIETLEKYLADLPTLDDVQSQSLQLQVLEEKNKNLQETLIDTEKQLEEIKKQCQDKEVQLLCQKKKEKELVTSVQSLQQKVEKCLEDGIRLPMLDAKQLQSENDNLREQNATASKIIESQQDEINRMILEIQSMQGKLCEEKLTARSTVEELGRKEGSLQRLTEALLENQRQMGETYSLLDQGHEAEQSRPQTIHSKWPLFDLTVIDQLFKEMSYCLFDLKALCSILNQRAQGKEPNLSLLLGIRSMNCSAEETENDHSPETLTKKLSDVCQLRRDIDELRTTISDRYAQDMGDNCVTQ</sequence>
<name>CE85L_MOUSE</name>
<evidence type="ECO:0000250" key="1">
    <source>
        <dbReference type="UniProtKB" id="Q5SZL2"/>
    </source>
</evidence>
<evidence type="ECO:0000255" key="2"/>
<evidence type="ECO:0000256" key="3">
    <source>
        <dbReference type="SAM" id="MobiDB-lite"/>
    </source>
</evidence>
<evidence type="ECO:0000269" key="4">
    <source>
    </source>
</evidence>
<evidence type="ECO:0000305" key="5"/>
<evidence type="ECO:0000312" key="6">
    <source>
        <dbReference type="MGI" id="MGI:3642684"/>
    </source>
</evidence>
<proteinExistence type="inferred from homology"/>
<dbReference type="EMBL" id="AC105169">
    <property type="status" value="NOT_ANNOTATED_CDS"/>
    <property type="molecule type" value="Genomic_DNA"/>
</dbReference>
<dbReference type="EMBL" id="AC153524">
    <property type="status" value="NOT_ANNOTATED_CDS"/>
    <property type="molecule type" value="Genomic_DNA"/>
</dbReference>
<dbReference type="CCDS" id="CCDS56701.1"/>
<dbReference type="RefSeq" id="NP_001191912.1">
    <property type="nucleotide sequence ID" value="NM_001204983.2"/>
</dbReference>
<dbReference type="SMR" id="A0A1W2P884"/>
<dbReference type="FunCoup" id="A0A1W2P884">
    <property type="interactions" value="153"/>
</dbReference>
<dbReference type="STRING" id="10090.ENSMUSP00000151909"/>
<dbReference type="iPTMnet" id="A0A1W2P884"/>
<dbReference type="PhosphoSitePlus" id="A0A1W2P884"/>
<dbReference type="PaxDb" id="10090-ENSMUSP00000093356"/>
<dbReference type="ProteomicsDB" id="339043"/>
<dbReference type="Antibodypedia" id="32566">
    <property type="antibodies" value="73 antibodies from 14 providers"/>
</dbReference>
<dbReference type="Ensembl" id="ENSMUST00000220443.2">
    <property type="protein sequence ID" value="ENSMUSP00000151909.2"/>
    <property type="gene ID" value="ENSMUSG00000038594.10"/>
</dbReference>
<dbReference type="GeneID" id="100038725"/>
<dbReference type="KEGG" id="mmu:100038725"/>
<dbReference type="AGR" id="MGI:3642684"/>
<dbReference type="CTD" id="387119"/>
<dbReference type="MGI" id="MGI:3642684">
    <property type="gene designation" value="Cep85l"/>
</dbReference>
<dbReference type="VEuPathDB" id="HostDB:ENSMUSG00000038594"/>
<dbReference type="eggNOG" id="ENOG502QR5U">
    <property type="taxonomic scope" value="Eukaryota"/>
</dbReference>
<dbReference type="GeneTree" id="ENSGT00620000087993"/>
<dbReference type="InParanoid" id="A0A1W2P884"/>
<dbReference type="OMA" id="GMILEIQ"/>
<dbReference type="OrthoDB" id="5972981at2759"/>
<dbReference type="ChiTaRS" id="Cep85l">
    <property type="organism name" value="mouse"/>
</dbReference>
<dbReference type="PRO" id="PR:A0A1W2P884"/>
<dbReference type="Proteomes" id="UP000000589">
    <property type="component" value="Chromosome 10"/>
</dbReference>
<dbReference type="RNAct" id="A0A1W2P884">
    <property type="molecule type" value="protein"/>
</dbReference>
<dbReference type="Bgee" id="ENSMUSG00000038594">
    <property type="expression patterns" value="Expressed in spermatid and 225 other cell types or tissues"/>
</dbReference>
<dbReference type="ExpressionAtlas" id="A0A1W2P884">
    <property type="expression patterns" value="baseline and differential"/>
</dbReference>
<dbReference type="GO" id="GO:0005737">
    <property type="term" value="C:cytoplasm"/>
    <property type="evidence" value="ECO:0007669"/>
    <property type="project" value="UniProtKB-KW"/>
</dbReference>
<dbReference type="GO" id="GO:0000242">
    <property type="term" value="C:pericentriolar material"/>
    <property type="evidence" value="ECO:0007669"/>
    <property type="project" value="Ensembl"/>
</dbReference>
<dbReference type="GO" id="GO:0001764">
    <property type="term" value="P:neuron migration"/>
    <property type="evidence" value="ECO:0007669"/>
    <property type="project" value="Ensembl"/>
</dbReference>
<dbReference type="InterPro" id="IPR040210">
    <property type="entry name" value="Cep85/Cep85L"/>
</dbReference>
<dbReference type="PANTHER" id="PTHR31075">
    <property type="entry name" value="CENTROSOMAL PROTEIN OF 85 KDA"/>
    <property type="match status" value="1"/>
</dbReference>
<dbReference type="PANTHER" id="PTHR31075:SF2">
    <property type="entry name" value="CENTROSOMAL PROTEIN OF 85 KDA-LIKE"/>
    <property type="match status" value="1"/>
</dbReference>
<dbReference type="Pfam" id="PF24555">
    <property type="entry name" value="CC4_CEP85"/>
    <property type="match status" value="1"/>
</dbReference>
<feature type="chain" id="PRO_0000452321" description="Centrosomal protein of 85 kDa-like">
    <location>
        <begin position="1"/>
        <end position="806"/>
    </location>
</feature>
<feature type="region of interest" description="Disordered" evidence="3">
    <location>
        <begin position="1"/>
        <end position="27"/>
    </location>
</feature>
<feature type="region of interest" description="Disordered" evidence="3">
    <location>
        <begin position="51"/>
        <end position="89"/>
    </location>
</feature>
<feature type="region of interest" description="Disordered" evidence="3">
    <location>
        <begin position="101"/>
        <end position="146"/>
    </location>
</feature>
<feature type="region of interest" description="Disordered" evidence="3">
    <location>
        <begin position="308"/>
        <end position="353"/>
    </location>
</feature>
<feature type="coiled-coil region" evidence="2">
    <location>
        <begin position="442"/>
        <end position="644"/>
    </location>
</feature>
<feature type="compositionally biased region" description="Polar residues" evidence="3">
    <location>
        <begin position="60"/>
        <end position="74"/>
    </location>
</feature>
<feature type="compositionally biased region" description="Basic and acidic residues" evidence="3">
    <location>
        <begin position="135"/>
        <end position="146"/>
    </location>
</feature>
<feature type="compositionally biased region" description="Polar residues" evidence="3">
    <location>
        <begin position="322"/>
        <end position="351"/>
    </location>
</feature>
<feature type="modified residue" description="Phosphoserine" evidence="1">
    <location>
        <position position="15"/>
    </location>
</feature>
<feature type="modified residue" description="Phosphoserine" evidence="1">
    <location>
        <position position="207"/>
    </location>
</feature>
<protein>
    <recommendedName>
        <fullName evidence="5">Centrosomal protein of 85 kDa-like</fullName>
    </recommendedName>
</protein>
<gene>
    <name evidence="6" type="primary">Cep85l</name>
</gene>
<keyword id="KW-0175">Coiled coil</keyword>
<keyword id="KW-0963">Cytoplasm</keyword>
<keyword id="KW-0206">Cytoskeleton</keyword>
<keyword id="KW-0597">Phosphoprotein</keyword>
<keyword id="KW-1185">Reference proteome</keyword>
<reference key="1">
    <citation type="journal article" date="2009" name="PLoS Biol.">
        <title>Lineage-specific biology revealed by a finished genome assembly of the mouse.</title>
        <authorList>
            <person name="Church D.M."/>
            <person name="Goodstadt L."/>
            <person name="Hillier L.W."/>
            <person name="Zody M.C."/>
            <person name="Goldstein S."/>
            <person name="She X."/>
            <person name="Bult C.J."/>
            <person name="Agarwala R."/>
            <person name="Cherry J.L."/>
            <person name="DiCuccio M."/>
            <person name="Hlavina W."/>
            <person name="Kapustin Y."/>
            <person name="Meric P."/>
            <person name="Maglott D."/>
            <person name="Birtle Z."/>
            <person name="Marques A.C."/>
            <person name="Graves T."/>
            <person name="Zhou S."/>
            <person name="Teague B."/>
            <person name="Potamousis K."/>
            <person name="Churas C."/>
            <person name="Place M."/>
            <person name="Herschleb J."/>
            <person name="Runnheim R."/>
            <person name="Forrest D."/>
            <person name="Amos-Landgraf J."/>
            <person name="Schwartz D.C."/>
            <person name="Cheng Z."/>
            <person name="Lindblad-Toh K."/>
            <person name="Eichler E.E."/>
            <person name="Ponting C.P."/>
        </authorList>
    </citation>
    <scope>NUCLEOTIDE SEQUENCE [LARGE SCALE GENOMIC DNA]</scope>
    <source>
        <strain>C57BL/6J</strain>
    </source>
</reference>
<reference key="2">
    <citation type="journal article" date="2020" name="Neuron">
        <title>Pathogenic Variants in CEP85L Cause Sporadic and Familial Posterior Predominant Lissencephaly.</title>
        <authorList>
            <consortium name="University of Washington Center for Mendelian Genomics"/>
            <person name="Tsai M.H."/>
            <person name="Muir A.M."/>
            <person name="Wang W.J."/>
            <person name="Kang Y.N."/>
            <person name="Yang K.C."/>
            <person name="Chao N.H."/>
            <person name="Wu M.F."/>
            <person name="Chang Y.C."/>
            <person name="Porter B.E."/>
            <person name="Jansen L.A."/>
            <person name="Sebire G."/>
            <person name="Deconinck N."/>
            <person name="Fan W.L."/>
            <person name="Su S.C."/>
            <person name="Chung W.H."/>
            <person name="Almanza Fuerte E.P."/>
            <person name="Mehaffey M.G."/>
            <person name="Ng C.C."/>
            <person name="Chan C.K."/>
            <person name="Lim K.S."/>
            <person name="Leventer R.J."/>
            <person name="Lockhart P.J."/>
            <person name="Riney K."/>
            <person name="Damiano J.A."/>
            <person name="Hildebrand M.S."/>
            <person name="Mirzaa G.M."/>
            <person name="Dobyns W.B."/>
            <person name="Berkovic S.F."/>
            <person name="Scheffer I.E."/>
            <person name="Tsai J.W."/>
            <person name="Mefford H.C."/>
        </authorList>
    </citation>
    <scope>FUNCTION</scope>
    <scope>DISRUPTION PHENOTYPE</scope>
</reference>
<comment type="function">
    <text evidence="4">Plays an essential role in neuronal cell migration.</text>
</comment>
<comment type="subcellular location">
    <subcellularLocation>
        <location evidence="1">Cytoplasm</location>
        <location evidence="1">Cytoskeleton</location>
        <location evidence="1">Microtubule organizing center</location>
        <location evidence="1">Centrosome</location>
    </subcellularLocation>
    <text evidence="1">Localized specifically to the pericentriolar region.</text>
</comment>
<comment type="disruption phenotype">
    <text evidence="4">Knockdown of the expression into neural stem cells of the mouse neocortex causes a neuronal migration defect.</text>
</comment>
<comment type="similarity">
    <text evidence="5">Belongs to the CEP85 family.</text>
</comment>